<name>KAD_ACTP2</name>
<evidence type="ECO:0000255" key="1">
    <source>
        <dbReference type="HAMAP-Rule" id="MF_00235"/>
    </source>
</evidence>
<proteinExistence type="inferred from homology"/>
<dbReference type="EC" id="2.7.4.3" evidence="1"/>
<dbReference type="EMBL" id="CP000569">
    <property type="protein sequence ID" value="ABN74384.1"/>
    <property type="molecule type" value="Genomic_DNA"/>
</dbReference>
<dbReference type="RefSeq" id="WP_005598358.1">
    <property type="nucleotide sequence ID" value="NC_009053.1"/>
</dbReference>
<dbReference type="SMR" id="A3N1U8"/>
<dbReference type="STRING" id="416269.APL_1298"/>
<dbReference type="EnsemblBacteria" id="ABN74384">
    <property type="protein sequence ID" value="ABN74384"/>
    <property type="gene ID" value="APL_1298"/>
</dbReference>
<dbReference type="GeneID" id="48599543"/>
<dbReference type="KEGG" id="apl:APL_1298"/>
<dbReference type="eggNOG" id="COG0563">
    <property type="taxonomic scope" value="Bacteria"/>
</dbReference>
<dbReference type="HOGENOM" id="CLU_032354_1_2_6"/>
<dbReference type="UniPathway" id="UPA00588">
    <property type="reaction ID" value="UER00649"/>
</dbReference>
<dbReference type="Proteomes" id="UP000001432">
    <property type="component" value="Chromosome"/>
</dbReference>
<dbReference type="GO" id="GO:0005737">
    <property type="term" value="C:cytoplasm"/>
    <property type="evidence" value="ECO:0007669"/>
    <property type="project" value="UniProtKB-SubCell"/>
</dbReference>
<dbReference type="GO" id="GO:0004017">
    <property type="term" value="F:adenylate kinase activity"/>
    <property type="evidence" value="ECO:0007669"/>
    <property type="project" value="UniProtKB-UniRule"/>
</dbReference>
<dbReference type="GO" id="GO:0005524">
    <property type="term" value="F:ATP binding"/>
    <property type="evidence" value="ECO:0007669"/>
    <property type="project" value="UniProtKB-UniRule"/>
</dbReference>
<dbReference type="GO" id="GO:0044209">
    <property type="term" value="P:AMP salvage"/>
    <property type="evidence" value="ECO:0007669"/>
    <property type="project" value="UniProtKB-UniRule"/>
</dbReference>
<dbReference type="CDD" id="cd01428">
    <property type="entry name" value="ADK"/>
    <property type="match status" value="1"/>
</dbReference>
<dbReference type="FunFam" id="3.40.50.300:FF:000106">
    <property type="entry name" value="Adenylate kinase mitochondrial"/>
    <property type="match status" value="1"/>
</dbReference>
<dbReference type="Gene3D" id="3.40.50.300">
    <property type="entry name" value="P-loop containing nucleotide triphosphate hydrolases"/>
    <property type="match status" value="1"/>
</dbReference>
<dbReference type="HAMAP" id="MF_00235">
    <property type="entry name" value="Adenylate_kinase_Adk"/>
    <property type="match status" value="1"/>
</dbReference>
<dbReference type="InterPro" id="IPR006259">
    <property type="entry name" value="Adenyl_kin_sub"/>
</dbReference>
<dbReference type="InterPro" id="IPR000850">
    <property type="entry name" value="Adenylat/UMP-CMP_kin"/>
</dbReference>
<dbReference type="InterPro" id="IPR033690">
    <property type="entry name" value="Adenylat_kinase_CS"/>
</dbReference>
<dbReference type="InterPro" id="IPR007862">
    <property type="entry name" value="Adenylate_kinase_lid-dom"/>
</dbReference>
<dbReference type="InterPro" id="IPR027417">
    <property type="entry name" value="P-loop_NTPase"/>
</dbReference>
<dbReference type="NCBIfam" id="TIGR01351">
    <property type="entry name" value="adk"/>
    <property type="match status" value="1"/>
</dbReference>
<dbReference type="NCBIfam" id="NF001379">
    <property type="entry name" value="PRK00279.1-1"/>
    <property type="match status" value="1"/>
</dbReference>
<dbReference type="NCBIfam" id="NF001380">
    <property type="entry name" value="PRK00279.1-2"/>
    <property type="match status" value="1"/>
</dbReference>
<dbReference type="NCBIfam" id="NF001381">
    <property type="entry name" value="PRK00279.1-3"/>
    <property type="match status" value="1"/>
</dbReference>
<dbReference type="PANTHER" id="PTHR23359">
    <property type="entry name" value="NUCLEOTIDE KINASE"/>
    <property type="match status" value="1"/>
</dbReference>
<dbReference type="Pfam" id="PF00406">
    <property type="entry name" value="ADK"/>
    <property type="match status" value="1"/>
</dbReference>
<dbReference type="Pfam" id="PF05191">
    <property type="entry name" value="ADK_lid"/>
    <property type="match status" value="1"/>
</dbReference>
<dbReference type="PRINTS" id="PR00094">
    <property type="entry name" value="ADENYLTKNASE"/>
</dbReference>
<dbReference type="SUPFAM" id="SSF52540">
    <property type="entry name" value="P-loop containing nucleoside triphosphate hydrolases"/>
    <property type="match status" value="1"/>
</dbReference>
<dbReference type="PROSITE" id="PS00113">
    <property type="entry name" value="ADENYLATE_KINASE"/>
    <property type="match status" value="1"/>
</dbReference>
<keyword id="KW-0067">ATP-binding</keyword>
<keyword id="KW-0963">Cytoplasm</keyword>
<keyword id="KW-0418">Kinase</keyword>
<keyword id="KW-0545">Nucleotide biosynthesis</keyword>
<keyword id="KW-0547">Nucleotide-binding</keyword>
<keyword id="KW-1185">Reference proteome</keyword>
<keyword id="KW-0808">Transferase</keyword>
<protein>
    <recommendedName>
        <fullName evidence="1">Adenylate kinase</fullName>
        <shortName evidence="1">AK</shortName>
        <ecNumber evidence="1">2.7.4.3</ecNumber>
    </recommendedName>
    <alternativeName>
        <fullName evidence="1">ATP-AMP transphosphorylase</fullName>
    </alternativeName>
    <alternativeName>
        <fullName evidence="1">ATP:AMP phosphotransferase</fullName>
    </alternativeName>
    <alternativeName>
        <fullName evidence="1">Adenylate monophosphate kinase</fullName>
    </alternativeName>
</protein>
<organism>
    <name type="scientific">Actinobacillus pleuropneumoniae serotype 5b (strain L20)</name>
    <dbReference type="NCBI Taxonomy" id="416269"/>
    <lineage>
        <taxon>Bacteria</taxon>
        <taxon>Pseudomonadati</taxon>
        <taxon>Pseudomonadota</taxon>
        <taxon>Gammaproteobacteria</taxon>
        <taxon>Pasteurellales</taxon>
        <taxon>Pasteurellaceae</taxon>
        <taxon>Actinobacillus</taxon>
    </lineage>
</organism>
<reference key="1">
    <citation type="journal article" date="2008" name="J. Bacteriol.">
        <title>The complete genome sequence of Actinobacillus pleuropneumoniae L20 (serotype 5b).</title>
        <authorList>
            <person name="Foote S.J."/>
            <person name="Bosse J.T."/>
            <person name="Bouevitch A.B."/>
            <person name="Langford P.R."/>
            <person name="Young N.M."/>
            <person name="Nash J.H.E."/>
        </authorList>
    </citation>
    <scope>NUCLEOTIDE SEQUENCE [LARGE SCALE GENOMIC DNA]</scope>
    <source>
        <strain>L20</strain>
    </source>
</reference>
<feature type="chain" id="PRO_1000058777" description="Adenylate kinase">
    <location>
        <begin position="1"/>
        <end position="214"/>
    </location>
</feature>
<feature type="region of interest" description="NMP" evidence="1">
    <location>
        <begin position="30"/>
        <end position="59"/>
    </location>
</feature>
<feature type="region of interest" description="LID" evidence="1">
    <location>
        <begin position="122"/>
        <end position="159"/>
    </location>
</feature>
<feature type="binding site" evidence="1">
    <location>
        <begin position="10"/>
        <end position="15"/>
    </location>
    <ligand>
        <name>ATP</name>
        <dbReference type="ChEBI" id="CHEBI:30616"/>
    </ligand>
</feature>
<feature type="binding site" evidence="1">
    <location>
        <position position="31"/>
    </location>
    <ligand>
        <name>AMP</name>
        <dbReference type="ChEBI" id="CHEBI:456215"/>
    </ligand>
</feature>
<feature type="binding site" evidence="1">
    <location>
        <position position="36"/>
    </location>
    <ligand>
        <name>AMP</name>
        <dbReference type="ChEBI" id="CHEBI:456215"/>
    </ligand>
</feature>
<feature type="binding site" evidence="1">
    <location>
        <begin position="57"/>
        <end position="59"/>
    </location>
    <ligand>
        <name>AMP</name>
        <dbReference type="ChEBI" id="CHEBI:456215"/>
    </ligand>
</feature>
<feature type="binding site" evidence="1">
    <location>
        <begin position="85"/>
        <end position="88"/>
    </location>
    <ligand>
        <name>AMP</name>
        <dbReference type="ChEBI" id="CHEBI:456215"/>
    </ligand>
</feature>
<feature type="binding site" evidence="1">
    <location>
        <position position="92"/>
    </location>
    <ligand>
        <name>AMP</name>
        <dbReference type="ChEBI" id="CHEBI:456215"/>
    </ligand>
</feature>
<feature type="binding site" evidence="1">
    <location>
        <position position="123"/>
    </location>
    <ligand>
        <name>ATP</name>
        <dbReference type="ChEBI" id="CHEBI:30616"/>
    </ligand>
</feature>
<feature type="binding site" evidence="1">
    <location>
        <begin position="132"/>
        <end position="133"/>
    </location>
    <ligand>
        <name>ATP</name>
        <dbReference type="ChEBI" id="CHEBI:30616"/>
    </ligand>
</feature>
<feature type="binding site" evidence="1">
    <location>
        <position position="156"/>
    </location>
    <ligand>
        <name>AMP</name>
        <dbReference type="ChEBI" id="CHEBI:456215"/>
    </ligand>
</feature>
<feature type="binding site" evidence="1">
    <location>
        <position position="167"/>
    </location>
    <ligand>
        <name>AMP</name>
        <dbReference type="ChEBI" id="CHEBI:456215"/>
    </ligand>
</feature>
<feature type="binding site" evidence="1">
    <location>
        <position position="200"/>
    </location>
    <ligand>
        <name>ATP</name>
        <dbReference type="ChEBI" id="CHEBI:30616"/>
    </ligand>
</feature>
<gene>
    <name evidence="1" type="primary">adk</name>
    <name type="ordered locus">APL_1298</name>
</gene>
<sequence>MKIILLGAPGAGKGTQAQFMMNKFGIPQISTGDMFRAAIKEGTELGKQAKALMDEGKLVPDELTVALVKDRIAQPDCANGFLLDGFPRTIPQADALKDSGVKIDLVLEFDVADEVIVERMSGRRVHQPSGRTYHVVYNPPKVEGKDDVTGEDLIIRQDDKPETVLERLAIYHKQTKPLIAYYTAEAEAGNTRYERLDGTKPVEEVSAELAKILG</sequence>
<comment type="function">
    <text evidence="1">Catalyzes the reversible transfer of the terminal phosphate group between ATP and AMP. Plays an important role in cellular energy homeostasis and in adenine nucleotide metabolism.</text>
</comment>
<comment type="catalytic activity">
    <reaction evidence="1">
        <text>AMP + ATP = 2 ADP</text>
        <dbReference type="Rhea" id="RHEA:12973"/>
        <dbReference type="ChEBI" id="CHEBI:30616"/>
        <dbReference type="ChEBI" id="CHEBI:456215"/>
        <dbReference type="ChEBI" id="CHEBI:456216"/>
        <dbReference type="EC" id="2.7.4.3"/>
    </reaction>
</comment>
<comment type="pathway">
    <text evidence="1">Purine metabolism; AMP biosynthesis via salvage pathway; AMP from ADP: step 1/1.</text>
</comment>
<comment type="subunit">
    <text evidence="1">Monomer.</text>
</comment>
<comment type="subcellular location">
    <subcellularLocation>
        <location evidence="1">Cytoplasm</location>
    </subcellularLocation>
</comment>
<comment type="domain">
    <text evidence="1">Consists of three domains, a large central CORE domain and two small peripheral domains, NMPbind and LID, which undergo movements during catalysis. The LID domain closes over the site of phosphoryl transfer upon ATP binding. Assembling and dissambling the active center during each catalytic cycle provides an effective means to prevent ATP hydrolysis.</text>
</comment>
<comment type="similarity">
    <text evidence="1">Belongs to the adenylate kinase family.</text>
</comment>
<accession>A3N1U8</accession>